<organism>
    <name type="scientific">Rana latastei</name>
    <name type="common">Italian agile frog</name>
    <dbReference type="NCBI Taxonomy" id="151453"/>
    <lineage>
        <taxon>Eukaryota</taxon>
        <taxon>Metazoa</taxon>
        <taxon>Chordata</taxon>
        <taxon>Craniata</taxon>
        <taxon>Vertebrata</taxon>
        <taxon>Euteleostomi</taxon>
        <taxon>Amphibia</taxon>
        <taxon>Batrachia</taxon>
        <taxon>Anura</taxon>
        <taxon>Neobatrachia</taxon>
        <taxon>Ranoidea</taxon>
        <taxon>Ranidae</taxon>
        <taxon>Rana</taxon>
        <taxon>Rana</taxon>
    </lineage>
</organism>
<sequence length="22" mass="2603">GLWETIKNFGKTFTLNILDYTK</sequence>
<dbReference type="GO" id="GO:0005576">
    <property type="term" value="C:extracellular region"/>
    <property type="evidence" value="ECO:0007669"/>
    <property type="project" value="UniProtKB-SubCell"/>
</dbReference>
<dbReference type="GO" id="GO:0042742">
    <property type="term" value="P:defense response to bacterium"/>
    <property type="evidence" value="ECO:0007669"/>
    <property type="project" value="UniProtKB-KW"/>
</dbReference>
<dbReference type="GO" id="GO:0045087">
    <property type="term" value="P:innate immune response"/>
    <property type="evidence" value="ECO:0007669"/>
    <property type="project" value="UniProtKB-KW"/>
</dbReference>
<feature type="peptide" id="PRO_0000454221" description="Brevinin-2LTa">
    <location>
        <begin position="1"/>
        <end position="22"/>
    </location>
</feature>
<feature type="unsure residue" description="Assigned by comparison with orthologs" evidence="5">
    <location>
        <position position="2"/>
    </location>
</feature>
<feature type="unsure residue" description="Assigned by comparison with orthologs" evidence="5">
    <location>
        <position position="6"/>
    </location>
</feature>
<feature type="unsure residue" description="Assigned by comparison with orthologs" evidence="5">
    <location>
        <position position="15"/>
    </location>
</feature>
<feature type="unsure residue" description="Assigned by comparison with orthologs" evidence="5">
    <location>
        <position position="17"/>
    </location>
</feature>
<feature type="unsure residue" description="Assigned by comparison with orthologs" evidence="5">
    <location>
        <position position="18"/>
    </location>
</feature>
<accession>C0HLY1</accession>
<reference evidence="4" key="1">
    <citation type="journal article" date="2016" name="Rapid Commun. Mass Spectrom.">
        <title>LTQ Orbitrap Velos in routine de novo sequencing of non-tryptic skin peptides from the frog Rana latastei with traditional and reliable manual spectra interpretation.</title>
        <authorList>
            <person name="Samgina T.Y."/>
            <person name="Tolpina M.D."/>
            <person name="Trebse P."/>
            <person name="Torkar G."/>
            <person name="Artemenko K.A."/>
            <person name="Bergquist J."/>
            <person name="Lebedev A.T."/>
        </authorList>
    </citation>
    <scope>PROTEIN SEQUENCE</scope>
    <scope>IDENTIFICATION BY MASS SPECTROMETRY</scope>
    <scope>SUBCELLULAR LOCATION</scope>
    <scope>TISSUE SPECIFICITY</scope>
</reference>
<comment type="function">
    <text evidence="1">Has antibacterial activity.</text>
</comment>
<comment type="subcellular location">
    <subcellularLocation>
        <location evidence="2">Secreted</location>
    </subcellularLocation>
</comment>
<comment type="tissue specificity">
    <text evidence="5">Expressed by the skin glands.</text>
</comment>
<comment type="mass spectrometry" mass="3389.92" method="Electrospray" evidence="2"/>
<comment type="similarity">
    <text evidence="4">Belongs to the frog skin active peptide (FSAP) family. Brevinin subfamily.</text>
</comment>
<keyword id="KW-0878">Amphibian defense peptide</keyword>
<keyword id="KW-0044">Antibiotic</keyword>
<keyword id="KW-0929">Antimicrobial</keyword>
<keyword id="KW-0903">Direct protein sequencing</keyword>
<keyword id="KW-0391">Immunity</keyword>
<keyword id="KW-0399">Innate immunity</keyword>
<keyword id="KW-0964">Secreted</keyword>
<protein>
    <recommendedName>
        <fullName evidence="3">Brevinin-2LTa</fullName>
    </recommendedName>
</protein>
<proteinExistence type="evidence at protein level"/>
<name>BR2A_RANLT</name>
<evidence type="ECO:0000250" key="1">
    <source>
        <dbReference type="UniProtKB" id="E1B231"/>
    </source>
</evidence>
<evidence type="ECO:0000269" key="2">
    <source>
    </source>
</evidence>
<evidence type="ECO:0000303" key="3">
    <source>
    </source>
</evidence>
<evidence type="ECO:0000305" key="4"/>
<evidence type="ECO:0000305" key="5">
    <source>
    </source>
</evidence>